<accession>Q5F5T0</accession>
<proteinExistence type="inferred from homology"/>
<protein>
    <recommendedName>
        <fullName evidence="1">Large ribosomal subunit protein uL2</fullName>
    </recommendedName>
    <alternativeName>
        <fullName evidence="3">50S ribosomal protein L2</fullName>
    </alternativeName>
</protein>
<comment type="function">
    <text evidence="1">One of the primary rRNA binding proteins. Required for association of the 30S and 50S subunits to form the 70S ribosome, for tRNA binding and peptide bond formation. It has been suggested to have peptidyltransferase activity; this is somewhat controversial. Makes several contacts with the 16S rRNA in the 70S ribosome.</text>
</comment>
<comment type="subunit">
    <text evidence="1">Part of the 50S ribosomal subunit. Forms a bridge to the 30S subunit in the 70S ribosome.</text>
</comment>
<comment type="similarity">
    <text evidence="1">Belongs to the universal ribosomal protein uL2 family.</text>
</comment>
<keyword id="KW-1185">Reference proteome</keyword>
<keyword id="KW-0687">Ribonucleoprotein</keyword>
<keyword id="KW-0689">Ribosomal protein</keyword>
<keyword id="KW-0694">RNA-binding</keyword>
<keyword id="KW-0699">rRNA-binding</keyword>
<name>RL2_NEIG1</name>
<reference key="1">
    <citation type="submission" date="2003-03" db="EMBL/GenBank/DDBJ databases">
        <title>The complete genome sequence of Neisseria gonorrhoeae.</title>
        <authorList>
            <person name="Lewis L.A."/>
            <person name="Gillaspy A.F."/>
            <person name="McLaughlin R.E."/>
            <person name="Gipson M."/>
            <person name="Ducey T.F."/>
            <person name="Ownbey T."/>
            <person name="Hartman K."/>
            <person name="Nydick C."/>
            <person name="Carson M.B."/>
            <person name="Vaughn J."/>
            <person name="Thomson C."/>
            <person name="Song L."/>
            <person name="Lin S."/>
            <person name="Yuan X."/>
            <person name="Najar F."/>
            <person name="Zhan M."/>
            <person name="Ren Q."/>
            <person name="Zhu H."/>
            <person name="Qi S."/>
            <person name="Kenton S.M."/>
            <person name="Lai H."/>
            <person name="White J.D."/>
            <person name="Clifton S."/>
            <person name="Roe B.A."/>
            <person name="Dyer D.W."/>
        </authorList>
    </citation>
    <scope>NUCLEOTIDE SEQUENCE [LARGE SCALE GENOMIC DNA]</scope>
    <source>
        <strain>ATCC 700825 / FA 1090</strain>
    </source>
</reference>
<evidence type="ECO:0000255" key="1">
    <source>
        <dbReference type="HAMAP-Rule" id="MF_01320"/>
    </source>
</evidence>
<evidence type="ECO:0000256" key="2">
    <source>
        <dbReference type="SAM" id="MobiDB-lite"/>
    </source>
</evidence>
<evidence type="ECO:0000305" key="3"/>
<dbReference type="EMBL" id="AE004969">
    <property type="protein sequence ID" value="AAW90457.1"/>
    <property type="molecule type" value="Genomic_DNA"/>
</dbReference>
<dbReference type="RefSeq" id="WP_003690083.1">
    <property type="nucleotide sequence ID" value="NC_002946.2"/>
</dbReference>
<dbReference type="RefSeq" id="YP_208869.1">
    <property type="nucleotide sequence ID" value="NC_002946.2"/>
</dbReference>
<dbReference type="SMR" id="Q5F5T0"/>
<dbReference type="STRING" id="242231.NGO_1835"/>
<dbReference type="GeneID" id="66754298"/>
<dbReference type="KEGG" id="ngo:NGO_1835"/>
<dbReference type="PATRIC" id="fig|242231.10.peg.2206"/>
<dbReference type="HOGENOM" id="CLU_036235_2_1_4"/>
<dbReference type="Proteomes" id="UP000000535">
    <property type="component" value="Chromosome"/>
</dbReference>
<dbReference type="GO" id="GO:0015934">
    <property type="term" value="C:large ribosomal subunit"/>
    <property type="evidence" value="ECO:0007669"/>
    <property type="project" value="InterPro"/>
</dbReference>
<dbReference type="GO" id="GO:0019843">
    <property type="term" value="F:rRNA binding"/>
    <property type="evidence" value="ECO:0007669"/>
    <property type="project" value="UniProtKB-UniRule"/>
</dbReference>
<dbReference type="GO" id="GO:0003735">
    <property type="term" value="F:structural constituent of ribosome"/>
    <property type="evidence" value="ECO:0007669"/>
    <property type="project" value="InterPro"/>
</dbReference>
<dbReference type="GO" id="GO:0016740">
    <property type="term" value="F:transferase activity"/>
    <property type="evidence" value="ECO:0007669"/>
    <property type="project" value="InterPro"/>
</dbReference>
<dbReference type="GO" id="GO:0002181">
    <property type="term" value="P:cytoplasmic translation"/>
    <property type="evidence" value="ECO:0007669"/>
    <property type="project" value="TreeGrafter"/>
</dbReference>
<dbReference type="FunFam" id="2.30.30.30:FF:000001">
    <property type="entry name" value="50S ribosomal protein L2"/>
    <property type="match status" value="1"/>
</dbReference>
<dbReference type="FunFam" id="2.40.50.140:FF:000003">
    <property type="entry name" value="50S ribosomal protein L2"/>
    <property type="match status" value="1"/>
</dbReference>
<dbReference type="FunFam" id="4.10.950.10:FF:000001">
    <property type="entry name" value="50S ribosomal protein L2"/>
    <property type="match status" value="1"/>
</dbReference>
<dbReference type="Gene3D" id="2.30.30.30">
    <property type="match status" value="1"/>
</dbReference>
<dbReference type="Gene3D" id="2.40.50.140">
    <property type="entry name" value="Nucleic acid-binding proteins"/>
    <property type="match status" value="1"/>
</dbReference>
<dbReference type="Gene3D" id="4.10.950.10">
    <property type="entry name" value="Ribosomal protein L2, domain 3"/>
    <property type="match status" value="1"/>
</dbReference>
<dbReference type="HAMAP" id="MF_01320_B">
    <property type="entry name" value="Ribosomal_uL2_B"/>
    <property type="match status" value="1"/>
</dbReference>
<dbReference type="InterPro" id="IPR012340">
    <property type="entry name" value="NA-bd_OB-fold"/>
</dbReference>
<dbReference type="InterPro" id="IPR014722">
    <property type="entry name" value="Rib_uL2_dom2"/>
</dbReference>
<dbReference type="InterPro" id="IPR002171">
    <property type="entry name" value="Ribosomal_uL2"/>
</dbReference>
<dbReference type="InterPro" id="IPR005880">
    <property type="entry name" value="Ribosomal_uL2_bac/org-type"/>
</dbReference>
<dbReference type="InterPro" id="IPR022669">
    <property type="entry name" value="Ribosomal_uL2_C"/>
</dbReference>
<dbReference type="InterPro" id="IPR022671">
    <property type="entry name" value="Ribosomal_uL2_CS"/>
</dbReference>
<dbReference type="InterPro" id="IPR014726">
    <property type="entry name" value="Ribosomal_uL2_dom3"/>
</dbReference>
<dbReference type="InterPro" id="IPR022666">
    <property type="entry name" value="Ribosomal_uL2_RNA-bd_dom"/>
</dbReference>
<dbReference type="InterPro" id="IPR008991">
    <property type="entry name" value="Translation_prot_SH3-like_sf"/>
</dbReference>
<dbReference type="NCBIfam" id="TIGR01171">
    <property type="entry name" value="rplB_bact"/>
    <property type="match status" value="1"/>
</dbReference>
<dbReference type="PANTHER" id="PTHR13691:SF5">
    <property type="entry name" value="LARGE RIBOSOMAL SUBUNIT PROTEIN UL2M"/>
    <property type="match status" value="1"/>
</dbReference>
<dbReference type="PANTHER" id="PTHR13691">
    <property type="entry name" value="RIBOSOMAL PROTEIN L2"/>
    <property type="match status" value="1"/>
</dbReference>
<dbReference type="Pfam" id="PF00181">
    <property type="entry name" value="Ribosomal_L2"/>
    <property type="match status" value="1"/>
</dbReference>
<dbReference type="Pfam" id="PF03947">
    <property type="entry name" value="Ribosomal_L2_C"/>
    <property type="match status" value="1"/>
</dbReference>
<dbReference type="PIRSF" id="PIRSF002158">
    <property type="entry name" value="Ribosomal_L2"/>
    <property type="match status" value="1"/>
</dbReference>
<dbReference type="SMART" id="SM01383">
    <property type="entry name" value="Ribosomal_L2"/>
    <property type="match status" value="1"/>
</dbReference>
<dbReference type="SMART" id="SM01382">
    <property type="entry name" value="Ribosomal_L2_C"/>
    <property type="match status" value="1"/>
</dbReference>
<dbReference type="SUPFAM" id="SSF50249">
    <property type="entry name" value="Nucleic acid-binding proteins"/>
    <property type="match status" value="1"/>
</dbReference>
<dbReference type="SUPFAM" id="SSF50104">
    <property type="entry name" value="Translation proteins SH3-like domain"/>
    <property type="match status" value="1"/>
</dbReference>
<dbReference type="PROSITE" id="PS00467">
    <property type="entry name" value="RIBOSOMAL_L2"/>
    <property type="match status" value="1"/>
</dbReference>
<gene>
    <name evidence="1" type="primary">rplB</name>
    <name type="ordered locus">NGO_1835</name>
</gene>
<feature type="chain" id="PRO_0000237214" description="Large ribosomal subunit protein uL2">
    <location>
        <begin position="1"/>
        <end position="277"/>
    </location>
</feature>
<feature type="region of interest" description="Disordered" evidence="2">
    <location>
        <begin position="37"/>
        <end position="60"/>
    </location>
</feature>
<feature type="region of interest" description="Disordered" evidence="2">
    <location>
        <begin position="223"/>
        <end position="264"/>
    </location>
</feature>
<feature type="compositionally biased region" description="Polar residues" evidence="2">
    <location>
        <begin position="39"/>
        <end position="49"/>
    </location>
</feature>
<feature type="compositionally biased region" description="Basic residues" evidence="2">
    <location>
        <begin position="50"/>
        <end position="60"/>
    </location>
</feature>
<feature type="compositionally biased region" description="Basic and acidic residues" evidence="2">
    <location>
        <begin position="229"/>
        <end position="244"/>
    </location>
</feature>
<organism>
    <name type="scientific">Neisseria gonorrhoeae (strain ATCC 700825 / FA 1090)</name>
    <dbReference type="NCBI Taxonomy" id="242231"/>
    <lineage>
        <taxon>Bacteria</taxon>
        <taxon>Pseudomonadati</taxon>
        <taxon>Pseudomonadota</taxon>
        <taxon>Betaproteobacteria</taxon>
        <taxon>Neisseriales</taxon>
        <taxon>Neisseriaceae</taxon>
        <taxon>Neisseria</taxon>
    </lineage>
</organism>
<sequence length="277" mass="30117">MAIVKMKPTSAGRRGMVRVVTEGLHKGAPYAPLLEKKNSTAGRNNNGHITTRHKGGGHKHHYRVVDFKRNKDGISAKVERIEYDPNRTAFIALLCYADGERRYIIAPRGIQAGVVLVSGAEAAIKVGNTLPIRNIPVGTTIHCIEMKPGKGAQIARSAGASAVLLAKEGAYAQVRLRSGEVRKINVDCRATIGEVGNEEQSLKKIGKAGANRWRGIRPTVRGVVMNPVDHPHGGGEGRTGEAREPVSPWGTPAKGYRTRNNKRTDNMIVRRRYSNKG</sequence>